<gene>
    <name evidence="1" type="primary">psbZ</name>
    <name type="synonym">ycf9</name>
</gene>
<dbReference type="EMBL" id="AF041468">
    <property type="protein sequence ID" value="AAC35694.1"/>
    <property type="molecule type" value="Genomic_DNA"/>
</dbReference>
<dbReference type="RefSeq" id="NP_050760.1">
    <property type="nucleotide sequence ID" value="NC_000926.1"/>
</dbReference>
<dbReference type="SMR" id="O78503"/>
<dbReference type="GeneID" id="857068"/>
<dbReference type="HOGENOM" id="CLU_195286_1_0_1"/>
<dbReference type="OMA" id="MSIVFQI"/>
<dbReference type="GO" id="GO:0009535">
    <property type="term" value="C:chloroplast thylakoid membrane"/>
    <property type="evidence" value="ECO:0007669"/>
    <property type="project" value="UniProtKB-SubCell"/>
</dbReference>
<dbReference type="GO" id="GO:0009539">
    <property type="term" value="C:photosystem II reaction center"/>
    <property type="evidence" value="ECO:0007669"/>
    <property type="project" value="InterPro"/>
</dbReference>
<dbReference type="GO" id="GO:0015979">
    <property type="term" value="P:photosynthesis"/>
    <property type="evidence" value="ECO:0007669"/>
    <property type="project" value="UniProtKB-UniRule"/>
</dbReference>
<dbReference type="GO" id="GO:0042549">
    <property type="term" value="P:photosystem II stabilization"/>
    <property type="evidence" value="ECO:0007669"/>
    <property type="project" value="InterPro"/>
</dbReference>
<dbReference type="Gene3D" id="1.10.287.740">
    <property type="entry name" value="Photosystem II PsbZ, reaction centre"/>
    <property type="match status" value="1"/>
</dbReference>
<dbReference type="HAMAP" id="MF_00644">
    <property type="entry name" value="PSII_PsbZ"/>
    <property type="match status" value="1"/>
</dbReference>
<dbReference type="InterPro" id="IPR002644">
    <property type="entry name" value="PSII_PsbZ"/>
</dbReference>
<dbReference type="InterPro" id="IPR036512">
    <property type="entry name" value="PSII_PsbZ_sf"/>
</dbReference>
<dbReference type="NCBIfam" id="TIGR03043">
    <property type="entry name" value="PS_II_psbZ"/>
    <property type="match status" value="1"/>
</dbReference>
<dbReference type="PANTHER" id="PTHR34971">
    <property type="entry name" value="PHOTOSYSTEM II REACTION CENTER PROTEIN Z"/>
    <property type="match status" value="1"/>
</dbReference>
<dbReference type="PANTHER" id="PTHR34971:SF2">
    <property type="entry name" value="PHOTOSYSTEM II REACTION CENTER PROTEIN Z"/>
    <property type="match status" value="1"/>
</dbReference>
<dbReference type="Pfam" id="PF01737">
    <property type="entry name" value="Ycf9"/>
    <property type="match status" value="1"/>
</dbReference>
<dbReference type="SUPFAM" id="SSF161055">
    <property type="entry name" value="PsbZ-like"/>
    <property type="match status" value="1"/>
</dbReference>
<organism>
    <name type="scientific">Guillardia theta</name>
    <name type="common">Cryptophyte</name>
    <name type="synonym">Cryptomonas phi</name>
    <dbReference type="NCBI Taxonomy" id="55529"/>
    <lineage>
        <taxon>Eukaryota</taxon>
        <taxon>Cryptophyceae</taxon>
        <taxon>Pyrenomonadales</taxon>
        <taxon>Geminigeraceae</taxon>
        <taxon>Guillardia</taxon>
    </lineage>
</organism>
<name>PSBZ_GUITH</name>
<protein>
    <recommendedName>
        <fullName evidence="1">Photosystem II reaction center protein Z</fullName>
        <shortName evidence="1">PSII-Z</shortName>
    </recommendedName>
</protein>
<geneLocation type="chloroplast"/>
<comment type="function">
    <text evidence="1">May control the interaction of photosystem II (PSII) cores with the light-harvesting antenna, regulates electron flow through the 2 photosystem reaction centers. PSII is a light-driven water plastoquinone oxidoreductase, using light energy to abstract electrons from H(2)O, generating a proton gradient subsequently used for ATP formation.</text>
</comment>
<comment type="subunit">
    <text evidence="1">PSII is composed of 1 copy each of membrane proteins PsbA, PsbB, PsbC, PsbD, PsbE, PsbF, PsbH, PsbI, PsbJ, PsbK, PsbL, PsbM, PsbT, PsbX, PsbY, PsbZ, Psb30/Ycf12, at least 3 peripheral proteins of the oxygen-evolving complex and a large number of cofactors. It forms dimeric complexes.</text>
</comment>
<comment type="subcellular location">
    <subcellularLocation>
        <location evidence="1">Plastid</location>
        <location evidence="1">Chloroplast thylakoid membrane</location>
        <topology evidence="1">Multi-pass membrane protein</topology>
    </subcellularLocation>
</comment>
<comment type="similarity">
    <text evidence="1">Belongs to the PsbZ family.</text>
</comment>
<keyword id="KW-0150">Chloroplast</keyword>
<keyword id="KW-0472">Membrane</keyword>
<keyword id="KW-0602">Photosynthesis</keyword>
<keyword id="KW-0604">Photosystem II</keyword>
<keyword id="KW-0934">Plastid</keyword>
<keyword id="KW-0674">Reaction center</keyword>
<keyword id="KW-0793">Thylakoid</keyword>
<keyword id="KW-0812">Transmembrane</keyword>
<keyword id="KW-1133">Transmembrane helix</keyword>
<proteinExistence type="inferred from homology"/>
<evidence type="ECO:0000255" key="1">
    <source>
        <dbReference type="HAMAP-Rule" id="MF_00644"/>
    </source>
</evidence>
<sequence>MVTILQLLVSILILLSFALVVGVPVILVSPGEWERSKNLVYASAGLWFGLVIVTAAFNSFVI</sequence>
<accession>O78503</accession>
<reference key="1">
    <citation type="journal article" date="1999" name="J. Mol. Evol.">
        <title>The plastid genome of the cryptophyte alga, Guillardia theta: complete sequence and conserved synteny groups confirm its common ancestry with red algae.</title>
        <authorList>
            <person name="Douglas S.E."/>
            <person name="Penny S.L."/>
        </authorList>
    </citation>
    <scope>NUCLEOTIDE SEQUENCE [LARGE SCALE GENOMIC DNA]</scope>
</reference>
<feature type="chain" id="PRO_0000217705" description="Photosystem II reaction center protein Z">
    <location>
        <begin position="1"/>
        <end position="62"/>
    </location>
</feature>
<feature type="transmembrane region" description="Helical" evidence="1">
    <location>
        <begin position="8"/>
        <end position="28"/>
    </location>
</feature>
<feature type="transmembrane region" description="Helical" evidence="1">
    <location>
        <begin position="41"/>
        <end position="61"/>
    </location>
</feature>